<dbReference type="EMBL" id="CR382124">
    <property type="protein sequence ID" value="CAH00822.1"/>
    <property type="molecule type" value="Genomic_DNA"/>
</dbReference>
<dbReference type="RefSeq" id="XP_453726.1">
    <property type="nucleotide sequence ID" value="XM_453726.1"/>
</dbReference>
<dbReference type="SMR" id="Q6CQR3"/>
<dbReference type="FunCoup" id="Q6CQR3">
    <property type="interactions" value="46"/>
</dbReference>
<dbReference type="STRING" id="284590.Q6CQR3"/>
<dbReference type="PaxDb" id="284590-Q6CQR3"/>
<dbReference type="KEGG" id="kla:KLLA0_D15015g"/>
<dbReference type="eggNOG" id="KOG0752">
    <property type="taxonomic scope" value="Eukaryota"/>
</dbReference>
<dbReference type="HOGENOM" id="CLU_015166_10_3_1"/>
<dbReference type="InParanoid" id="Q6CQR3"/>
<dbReference type="OMA" id="MYVCYGA"/>
<dbReference type="Proteomes" id="UP000000598">
    <property type="component" value="Chromosome D"/>
</dbReference>
<dbReference type="GO" id="GO:0005743">
    <property type="term" value="C:mitochondrial inner membrane"/>
    <property type="evidence" value="ECO:0007669"/>
    <property type="project" value="UniProtKB-SubCell"/>
</dbReference>
<dbReference type="GO" id="GO:0055085">
    <property type="term" value="P:transmembrane transport"/>
    <property type="evidence" value="ECO:0007669"/>
    <property type="project" value="InterPro"/>
</dbReference>
<dbReference type="Gene3D" id="1.50.40.10">
    <property type="entry name" value="Mitochondrial carrier domain"/>
    <property type="match status" value="1"/>
</dbReference>
<dbReference type="InterPro" id="IPR002067">
    <property type="entry name" value="Mit_carrier"/>
</dbReference>
<dbReference type="InterPro" id="IPR018108">
    <property type="entry name" value="Mitochondrial_sb/sol_carrier"/>
</dbReference>
<dbReference type="InterPro" id="IPR023395">
    <property type="entry name" value="Mt_carrier_dom_sf"/>
</dbReference>
<dbReference type="PANTHER" id="PTHR24089">
    <property type="entry name" value="SOLUTE CARRIER FAMILY 25"/>
    <property type="match status" value="1"/>
</dbReference>
<dbReference type="Pfam" id="PF00153">
    <property type="entry name" value="Mito_carr"/>
    <property type="match status" value="3"/>
</dbReference>
<dbReference type="PRINTS" id="PR00926">
    <property type="entry name" value="MITOCARRIER"/>
</dbReference>
<dbReference type="SUPFAM" id="SSF103506">
    <property type="entry name" value="Mitochondrial carrier"/>
    <property type="match status" value="1"/>
</dbReference>
<dbReference type="PROSITE" id="PS50920">
    <property type="entry name" value="SOLCAR"/>
    <property type="match status" value="3"/>
</dbReference>
<name>TPC1_KLULA</name>
<gene>
    <name type="primary">TPC1</name>
    <name type="ordered locus">KLLA0D15015g</name>
</gene>
<evidence type="ECO:0000250" key="1"/>
<evidence type="ECO:0000255" key="2"/>
<evidence type="ECO:0000305" key="3"/>
<sequence>MNTGIRKDHLRKGETVSWYNSVIAGSVSGVFARMATAPMDTVKIRYQLQPVQEDKYKGIASTVRTIMKEEGLRALWKGNIPATAMYVVYGAVQFGSYSWFNNVWSAKFPRFSQQGQTLTVGALAGMTSSVVSYPLDLLRTRLIANRTSHRTSVAEECRQMWLNEGVRGFFTGISTAMTTVTLSTAIMFLTYETVNIVCENHEKEFWSRPVSASSGIIAGFVSKTMVFPIDTLRRRMQVMNSKRTVHFTKFPAVYHEYRYKSSTAIIYKILRQEGVSALYRGLTMGLCKSVPTTAISLFVYERTMDLFDHGQRWGRSP</sequence>
<comment type="function">
    <text evidence="1">Mitochondrial transporter that mediates uptake of thiamine pyrophosphate (ThPP) into mitochondria.</text>
</comment>
<comment type="subcellular location">
    <subcellularLocation>
        <location evidence="1">Mitochondrion inner membrane</location>
        <topology evidence="1">Multi-pass membrane protein</topology>
    </subcellularLocation>
</comment>
<comment type="similarity">
    <text evidence="3">Belongs to the mitochondrial carrier (TC 2.A.29) family.</text>
</comment>
<keyword id="KW-0472">Membrane</keyword>
<keyword id="KW-0496">Mitochondrion</keyword>
<keyword id="KW-0999">Mitochondrion inner membrane</keyword>
<keyword id="KW-1185">Reference proteome</keyword>
<keyword id="KW-0677">Repeat</keyword>
<keyword id="KW-0812">Transmembrane</keyword>
<keyword id="KW-1133">Transmembrane helix</keyword>
<keyword id="KW-0813">Transport</keyword>
<proteinExistence type="inferred from homology"/>
<organism>
    <name type="scientific">Kluyveromyces lactis (strain ATCC 8585 / CBS 2359 / DSM 70799 / NBRC 1267 / NRRL Y-1140 / WM37)</name>
    <name type="common">Yeast</name>
    <name type="synonym">Candida sphaerica</name>
    <dbReference type="NCBI Taxonomy" id="284590"/>
    <lineage>
        <taxon>Eukaryota</taxon>
        <taxon>Fungi</taxon>
        <taxon>Dikarya</taxon>
        <taxon>Ascomycota</taxon>
        <taxon>Saccharomycotina</taxon>
        <taxon>Saccharomycetes</taxon>
        <taxon>Saccharomycetales</taxon>
        <taxon>Saccharomycetaceae</taxon>
        <taxon>Kluyveromyces</taxon>
    </lineage>
</organism>
<feature type="chain" id="PRO_0000320466" description="Mitochondrial thiamine pyrophosphate carrier 1">
    <location>
        <begin position="1"/>
        <end position="317"/>
    </location>
</feature>
<feature type="transmembrane region" description="Helical; Name=1" evidence="2">
    <location>
        <begin position="15"/>
        <end position="37"/>
    </location>
</feature>
<feature type="transmembrane region" description="Helical; Name=2" evidence="2">
    <location>
        <begin position="80"/>
        <end position="100"/>
    </location>
</feature>
<feature type="transmembrane region" description="Helical; Name=3" evidence="2">
    <location>
        <begin position="118"/>
        <end position="138"/>
    </location>
</feature>
<feature type="transmembrane region" description="Helical; Name=4" evidence="2">
    <location>
        <begin position="168"/>
        <end position="190"/>
    </location>
</feature>
<feature type="transmembrane region" description="Helical; Name=5" evidence="2">
    <location>
        <begin position="205"/>
        <end position="227"/>
    </location>
</feature>
<feature type="transmembrane region" description="Helical; Name=6" evidence="2">
    <location>
        <begin position="281"/>
        <end position="300"/>
    </location>
</feature>
<feature type="repeat" description="Solcar 1">
    <location>
        <begin position="16"/>
        <end position="103"/>
    </location>
</feature>
<feature type="repeat" description="Solcar 2">
    <location>
        <begin position="112"/>
        <end position="197"/>
    </location>
</feature>
<feature type="repeat" description="Solcar 3">
    <location>
        <begin position="206"/>
        <end position="306"/>
    </location>
</feature>
<protein>
    <recommendedName>
        <fullName>Mitochondrial thiamine pyrophosphate carrier 1</fullName>
    </recommendedName>
</protein>
<accession>Q6CQR3</accession>
<reference key="1">
    <citation type="journal article" date="2004" name="Nature">
        <title>Genome evolution in yeasts.</title>
        <authorList>
            <person name="Dujon B."/>
            <person name="Sherman D."/>
            <person name="Fischer G."/>
            <person name="Durrens P."/>
            <person name="Casaregola S."/>
            <person name="Lafontaine I."/>
            <person name="de Montigny J."/>
            <person name="Marck C."/>
            <person name="Neuveglise C."/>
            <person name="Talla E."/>
            <person name="Goffard N."/>
            <person name="Frangeul L."/>
            <person name="Aigle M."/>
            <person name="Anthouard V."/>
            <person name="Babour A."/>
            <person name="Barbe V."/>
            <person name="Barnay S."/>
            <person name="Blanchin S."/>
            <person name="Beckerich J.-M."/>
            <person name="Beyne E."/>
            <person name="Bleykasten C."/>
            <person name="Boisrame A."/>
            <person name="Boyer J."/>
            <person name="Cattolico L."/>
            <person name="Confanioleri F."/>
            <person name="de Daruvar A."/>
            <person name="Despons L."/>
            <person name="Fabre E."/>
            <person name="Fairhead C."/>
            <person name="Ferry-Dumazet H."/>
            <person name="Groppi A."/>
            <person name="Hantraye F."/>
            <person name="Hennequin C."/>
            <person name="Jauniaux N."/>
            <person name="Joyet P."/>
            <person name="Kachouri R."/>
            <person name="Kerrest A."/>
            <person name="Koszul R."/>
            <person name="Lemaire M."/>
            <person name="Lesur I."/>
            <person name="Ma L."/>
            <person name="Muller H."/>
            <person name="Nicaud J.-M."/>
            <person name="Nikolski M."/>
            <person name="Oztas S."/>
            <person name="Ozier-Kalogeropoulos O."/>
            <person name="Pellenz S."/>
            <person name="Potier S."/>
            <person name="Richard G.-F."/>
            <person name="Straub M.-L."/>
            <person name="Suleau A."/>
            <person name="Swennen D."/>
            <person name="Tekaia F."/>
            <person name="Wesolowski-Louvel M."/>
            <person name="Westhof E."/>
            <person name="Wirth B."/>
            <person name="Zeniou-Meyer M."/>
            <person name="Zivanovic Y."/>
            <person name="Bolotin-Fukuhara M."/>
            <person name="Thierry A."/>
            <person name="Bouchier C."/>
            <person name="Caudron B."/>
            <person name="Scarpelli C."/>
            <person name="Gaillardin C."/>
            <person name="Weissenbach J."/>
            <person name="Wincker P."/>
            <person name="Souciet J.-L."/>
        </authorList>
    </citation>
    <scope>NUCLEOTIDE SEQUENCE [LARGE SCALE GENOMIC DNA]</scope>
    <source>
        <strain>ATCC 8585 / CBS 2359 / DSM 70799 / NBRC 1267 / NRRL Y-1140 / WM37</strain>
    </source>
</reference>